<comment type="function">
    <text evidence="1">Cell wall formation. Catalyzes the addition of glutamate to the nucleotide precursor UDP-N-acetylmuramoyl-L-alanine (UMA).</text>
</comment>
<comment type="catalytic activity">
    <reaction evidence="1">
        <text>UDP-N-acetyl-alpha-D-muramoyl-L-alanine + D-glutamate + ATP = UDP-N-acetyl-alpha-D-muramoyl-L-alanyl-D-glutamate + ADP + phosphate + H(+)</text>
        <dbReference type="Rhea" id="RHEA:16429"/>
        <dbReference type="ChEBI" id="CHEBI:15378"/>
        <dbReference type="ChEBI" id="CHEBI:29986"/>
        <dbReference type="ChEBI" id="CHEBI:30616"/>
        <dbReference type="ChEBI" id="CHEBI:43474"/>
        <dbReference type="ChEBI" id="CHEBI:83898"/>
        <dbReference type="ChEBI" id="CHEBI:83900"/>
        <dbReference type="ChEBI" id="CHEBI:456216"/>
        <dbReference type="EC" id="6.3.2.9"/>
    </reaction>
</comment>
<comment type="pathway">
    <text evidence="1">Cell wall biogenesis; peptidoglycan biosynthesis.</text>
</comment>
<comment type="subcellular location">
    <subcellularLocation>
        <location evidence="1">Cytoplasm</location>
    </subcellularLocation>
</comment>
<comment type="similarity">
    <text evidence="1">Belongs to the MurCDEF family.</text>
</comment>
<dbReference type="EC" id="6.3.2.9" evidence="1"/>
<dbReference type="EMBL" id="CP000803">
    <property type="protein sequence ID" value="ABU62177.1"/>
    <property type="molecule type" value="Genomic_DNA"/>
</dbReference>
<dbReference type="RefSeq" id="WP_003017010.1">
    <property type="nucleotide sequence ID" value="NC_009749.1"/>
</dbReference>
<dbReference type="SMR" id="A7NDX4"/>
<dbReference type="KEGG" id="fta:FTA_1702"/>
<dbReference type="HOGENOM" id="CLU_032540_1_0_6"/>
<dbReference type="UniPathway" id="UPA00219"/>
<dbReference type="GO" id="GO:0005737">
    <property type="term" value="C:cytoplasm"/>
    <property type="evidence" value="ECO:0007669"/>
    <property type="project" value="UniProtKB-SubCell"/>
</dbReference>
<dbReference type="GO" id="GO:0005524">
    <property type="term" value="F:ATP binding"/>
    <property type="evidence" value="ECO:0007669"/>
    <property type="project" value="UniProtKB-UniRule"/>
</dbReference>
<dbReference type="GO" id="GO:0008764">
    <property type="term" value="F:UDP-N-acetylmuramoylalanine-D-glutamate ligase activity"/>
    <property type="evidence" value="ECO:0007669"/>
    <property type="project" value="UniProtKB-UniRule"/>
</dbReference>
<dbReference type="GO" id="GO:0051301">
    <property type="term" value="P:cell division"/>
    <property type="evidence" value="ECO:0007669"/>
    <property type="project" value="UniProtKB-KW"/>
</dbReference>
<dbReference type="GO" id="GO:0071555">
    <property type="term" value="P:cell wall organization"/>
    <property type="evidence" value="ECO:0007669"/>
    <property type="project" value="UniProtKB-KW"/>
</dbReference>
<dbReference type="GO" id="GO:0009252">
    <property type="term" value="P:peptidoglycan biosynthetic process"/>
    <property type="evidence" value="ECO:0007669"/>
    <property type="project" value="UniProtKB-UniRule"/>
</dbReference>
<dbReference type="GO" id="GO:0008360">
    <property type="term" value="P:regulation of cell shape"/>
    <property type="evidence" value="ECO:0007669"/>
    <property type="project" value="UniProtKB-KW"/>
</dbReference>
<dbReference type="Gene3D" id="3.90.190.20">
    <property type="entry name" value="Mur ligase, C-terminal domain"/>
    <property type="match status" value="1"/>
</dbReference>
<dbReference type="Gene3D" id="3.40.1190.10">
    <property type="entry name" value="Mur-like, catalytic domain"/>
    <property type="match status" value="1"/>
</dbReference>
<dbReference type="HAMAP" id="MF_00639">
    <property type="entry name" value="MurD"/>
    <property type="match status" value="1"/>
</dbReference>
<dbReference type="InterPro" id="IPR036565">
    <property type="entry name" value="Mur-like_cat_sf"/>
</dbReference>
<dbReference type="InterPro" id="IPR004101">
    <property type="entry name" value="Mur_ligase_C"/>
</dbReference>
<dbReference type="InterPro" id="IPR036615">
    <property type="entry name" value="Mur_ligase_C_dom_sf"/>
</dbReference>
<dbReference type="InterPro" id="IPR013221">
    <property type="entry name" value="Mur_ligase_cen"/>
</dbReference>
<dbReference type="InterPro" id="IPR005762">
    <property type="entry name" value="MurD"/>
</dbReference>
<dbReference type="NCBIfam" id="TIGR01087">
    <property type="entry name" value="murD"/>
    <property type="match status" value="1"/>
</dbReference>
<dbReference type="PANTHER" id="PTHR43692">
    <property type="entry name" value="UDP-N-ACETYLMURAMOYLALANINE--D-GLUTAMATE LIGASE"/>
    <property type="match status" value="1"/>
</dbReference>
<dbReference type="PANTHER" id="PTHR43692:SF1">
    <property type="entry name" value="UDP-N-ACETYLMURAMOYLALANINE--D-GLUTAMATE LIGASE"/>
    <property type="match status" value="1"/>
</dbReference>
<dbReference type="Pfam" id="PF02875">
    <property type="entry name" value="Mur_ligase_C"/>
    <property type="match status" value="1"/>
</dbReference>
<dbReference type="Pfam" id="PF08245">
    <property type="entry name" value="Mur_ligase_M"/>
    <property type="match status" value="1"/>
</dbReference>
<dbReference type="SUPFAM" id="SSF53623">
    <property type="entry name" value="MurD-like peptide ligases, catalytic domain"/>
    <property type="match status" value="1"/>
</dbReference>
<dbReference type="SUPFAM" id="SSF53244">
    <property type="entry name" value="MurD-like peptide ligases, peptide-binding domain"/>
    <property type="match status" value="1"/>
</dbReference>
<accession>A7NDX4</accession>
<protein>
    <recommendedName>
        <fullName evidence="1">UDP-N-acetylmuramoylalanine--D-glutamate ligase</fullName>
        <ecNumber evidence="1">6.3.2.9</ecNumber>
    </recommendedName>
    <alternativeName>
        <fullName evidence="1">D-glutamic acid-adding enzyme</fullName>
    </alternativeName>
    <alternativeName>
        <fullName evidence="1">UDP-N-acetylmuramoyl-L-alanyl-D-glutamate synthetase</fullName>
    </alternativeName>
</protein>
<name>MURD_FRATF</name>
<keyword id="KW-0067">ATP-binding</keyword>
<keyword id="KW-0131">Cell cycle</keyword>
<keyword id="KW-0132">Cell division</keyword>
<keyword id="KW-0133">Cell shape</keyword>
<keyword id="KW-0961">Cell wall biogenesis/degradation</keyword>
<keyword id="KW-0963">Cytoplasm</keyword>
<keyword id="KW-0436">Ligase</keyword>
<keyword id="KW-0547">Nucleotide-binding</keyword>
<keyword id="KW-0573">Peptidoglycan synthesis</keyword>
<gene>
    <name evidence="1" type="primary">murD</name>
    <name type="ordered locus">FTA_1702</name>
</gene>
<reference key="1">
    <citation type="journal article" date="2009" name="PLoS ONE">
        <title>Complete genome sequence of Francisella tularensis subspecies holarctica FTNF002-00.</title>
        <authorList>
            <person name="Barabote R.D."/>
            <person name="Xie G."/>
            <person name="Brettin T.S."/>
            <person name="Hinrichs S.H."/>
            <person name="Fey P.D."/>
            <person name="Jay J.J."/>
            <person name="Engle J.L."/>
            <person name="Godbole S.D."/>
            <person name="Noronha J.M."/>
            <person name="Scheuermann R.H."/>
            <person name="Zhou L.W."/>
            <person name="Lion C."/>
            <person name="Dempsey M.P."/>
        </authorList>
    </citation>
    <scope>NUCLEOTIDE SEQUENCE [LARGE SCALE GENOMIC DNA]</scope>
    <source>
        <strain>FTNF002-00 / FTA</strain>
    </source>
</reference>
<organism>
    <name type="scientific">Francisella tularensis subsp. holarctica (strain FTNF002-00 / FTA)</name>
    <dbReference type="NCBI Taxonomy" id="458234"/>
    <lineage>
        <taxon>Bacteria</taxon>
        <taxon>Pseudomonadati</taxon>
        <taxon>Pseudomonadota</taxon>
        <taxon>Gammaproteobacteria</taxon>
        <taxon>Thiotrichales</taxon>
        <taxon>Francisellaceae</taxon>
        <taxon>Francisella</taxon>
    </lineage>
</organism>
<proteinExistence type="inferred from homology"/>
<sequence length="416" mass="46779">MFSFYFNDNKITKLLMVGYGSTGKSVCDFLANFIDITVDISQNDDEFVNYDLNSYDLITVSPGIPLNKSPYRALTKFKDKIVSDIDIFYQYIKDTKAKTIAVTGSNGKSTVVTMTDFVLKDLGYKSILVGNIGTPALNKIGEKFDYCVVEVSSFQINLFNCVRFDLGCIINVSPDHLDRYQNFEQYKQSKLNLAKFSNDFFVYDVHNGIKYAGEYQIIRGAIYRNSTKLLDIVETKLFGEHNLENIIVVLNILDRLGLDINQAIDSIKKFKGLEHRCKIVKKVNGTTYINDSKGTNVGATIAALNSITNSKNIILLLGGVAKGGDFSLMIKSLDKYVKYVYIYGADKEYIESYIKGYCKYQLCNNMKQAFELASQKANSNEIVLLSPACASFDEFSGYAQRGEVFQNLVAQLEQKS</sequence>
<evidence type="ECO:0000255" key="1">
    <source>
        <dbReference type="HAMAP-Rule" id="MF_00639"/>
    </source>
</evidence>
<feature type="chain" id="PRO_1000056883" description="UDP-N-acetylmuramoylalanine--D-glutamate ligase">
    <location>
        <begin position="1"/>
        <end position="416"/>
    </location>
</feature>
<feature type="binding site" evidence="1">
    <location>
        <begin position="104"/>
        <end position="110"/>
    </location>
    <ligand>
        <name>ATP</name>
        <dbReference type="ChEBI" id="CHEBI:30616"/>
    </ligand>
</feature>